<feature type="chain" id="PRO_0000392840" description="Dermonecrotic toxin LlSicTox-alphaIV2ii">
    <location>
        <begin position="1" status="less than"/>
        <end position="276"/>
    </location>
</feature>
<feature type="active site" evidence="5">
    <location>
        <position position="5"/>
    </location>
</feature>
<feature type="active site" description="Nucleophile" evidence="5">
    <location>
        <position position="41"/>
    </location>
</feature>
<feature type="binding site" evidence="5">
    <location>
        <position position="25"/>
    </location>
    <ligand>
        <name>Mg(2+)</name>
        <dbReference type="ChEBI" id="CHEBI:18420"/>
    </ligand>
</feature>
<feature type="binding site" evidence="5">
    <location>
        <position position="27"/>
    </location>
    <ligand>
        <name>Mg(2+)</name>
        <dbReference type="ChEBI" id="CHEBI:18420"/>
    </ligand>
</feature>
<feature type="binding site" evidence="5">
    <location>
        <position position="85"/>
    </location>
    <ligand>
        <name>Mg(2+)</name>
        <dbReference type="ChEBI" id="CHEBI:18420"/>
    </ligand>
</feature>
<feature type="disulfide bond" evidence="3">
    <location>
        <begin position="45"/>
        <end position="51"/>
    </location>
</feature>
<feature type="disulfide bond" evidence="3">
    <location>
        <begin position="47"/>
        <end position="193"/>
    </location>
</feature>
<feature type="non-terminal residue">
    <location>
        <position position="1"/>
    </location>
</feature>
<evidence type="ECO:0000250" key="1">
    <source>
        <dbReference type="UniProtKB" id="A0A0D4WTV1"/>
    </source>
</evidence>
<evidence type="ECO:0000250" key="2">
    <source>
        <dbReference type="UniProtKB" id="A0A0D4WV12"/>
    </source>
</evidence>
<evidence type="ECO:0000250" key="3">
    <source>
        <dbReference type="UniProtKB" id="P0CE80"/>
    </source>
</evidence>
<evidence type="ECO:0000250" key="4">
    <source>
        <dbReference type="UniProtKB" id="Q4ZFU2"/>
    </source>
</evidence>
<evidence type="ECO:0000250" key="5">
    <source>
        <dbReference type="UniProtKB" id="Q8I914"/>
    </source>
</evidence>
<evidence type="ECO:0000303" key="6">
    <source>
    </source>
</evidence>
<evidence type="ECO:0000305" key="7"/>
<evidence type="ECO:0000305" key="8">
    <source>
    </source>
</evidence>
<name>A422_LOXLA</name>
<protein>
    <recommendedName>
        <fullName evidence="6">Dermonecrotic toxin LlSicTox-alphaIV2ii</fullName>
        <ecNumber evidence="4">4.6.1.-</ecNumber>
    </recommendedName>
    <alternativeName>
        <fullName>Phospholipase D</fullName>
        <shortName>PLD</shortName>
    </alternativeName>
    <alternativeName>
        <fullName>Sphingomyelin phosphodiesterase D</fullName>
        <shortName>SMD</shortName>
        <shortName>SMase D</shortName>
        <shortName>Sphingomyelinase D</shortName>
    </alternativeName>
</protein>
<comment type="function">
    <text evidence="1 3">Dermonecrotic toxins cleave the phosphodiester linkage between the phosphate and headgroup of certain phospholipids (sphingolipid and lysolipid substrates), forming an alcohol (often choline) and a cyclic phosphate (By similarity). This toxin acts on sphingomyelin (SM) (By similarity). It may also act on ceramide phosphoethanolamine (CPE), lysophosphatidylcholine (LPC) and lysophosphatidylethanolamine (LPE), but not on lysophosphatidylserine (LPS), and lysophosphatidylglycerol (LPG) (By similarity). It acts by transphosphatidylation, releasing exclusively cyclic phosphate products as second products (By similarity). Induces dermonecrosis, hemolysis, increased vascular permeability, edema, inflammatory response, and platelet aggregation (By similarity).</text>
</comment>
<comment type="catalytic activity">
    <reaction evidence="1">
        <text>an N-(acyl)-sphingosylphosphocholine = an N-(acyl)-sphingosyl-1,3-cyclic phosphate + choline</text>
        <dbReference type="Rhea" id="RHEA:60652"/>
        <dbReference type="ChEBI" id="CHEBI:15354"/>
        <dbReference type="ChEBI" id="CHEBI:64583"/>
        <dbReference type="ChEBI" id="CHEBI:143892"/>
    </reaction>
</comment>
<comment type="catalytic activity">
    <reaction evidence="1">
        <text>an N-(acyl)-sphingosylphosphoethanolamine = an N-(acyl)-sphingosyl-1,3-cyclic phosphate + ethanolamine</text>
        <dbReference type="Rhea" id="RHEA:60648"/>
        <dbReference type="ChEBI" id="CHEBI:57603"/>
        <dbReference type="ChEBI" id="CHEBI:143891"/>
        <dbReference type="ChEBI" id="CHEBI:143892"/>
    </reaction>
</comment>
<comment type="catalytic activity">
    <reaction evidence="1">
        <text>a 1-acyl-sn-glycero-3-phosphocholine = a 1-acyl-sn-glycero-2,3-cyclic phosphate + choline</text>
        <dbReference type="Rhea" id="RHEA:60700"/>
        <dbReference type="ChEBI" id="CHEBI:15354"/>
        <dbReference type="ChEBI" id="CHEBI:58168"/>
        <dbReference type="ChEBI" id="CHEBI:143947"/>
    </reaction>
</comment>
<comment type="catalytic activity">
    <reaction evidence="1">
        <text>a 1-acyl-sn-glycero-3-phosphoethanolamine = a 1-acyl-sn-glycero-2,3-cyclic phosphate + ethanolamine</text>
        <dbReference type="Rhea" id="RHEA:60704"/>
        <dbReference type="ChEBI" id="CHEBI:57603"/>
        <dbReference type="ChEBI" id="CHEBI:64381"/>
        <dbReference type="ChEBI" id="CHEBI:143947"/>
    </reaction>
</comment>
<comment type="cofactor">
    <cofactor evidence="5">
        <name>Mg(2+)</name>
        <dbReference type="ChEBI" id="CHEBI:18420"/>
    </cofactor>
    <text evidence="5">Binds 1 Mg(2+) ion per subunit.</text>
</comment>
<comment type="subcellular location">
    <subcellularLocation>
        <location evidence="8">Secreted</location>
    </subcellularLocation>
</comment>
<comment type="tissue specificity">
    <text evidence="8">Expressed by the venom gland.</text>
</comment>
<comment type="similarity">
    <text evidence="7">Belongs to the arthropod phospholipase D family. Class II subfamily.</text>
</comment>
<comment type="caution">
    <text evidence="1 2 4">The most common activity assay for dermonecrotic toxins detects enzymatic activity by monitoring choline release from substrate. Liberation of choline from sphingomyelin (SM) or lysophosphatidylcholine (LPC) is commonly assumed to result from substrate hydrolysis, giving either ceramide-1-phosphate (C1P) or lysophosphatidic acid (LPA), respectively, as a second product. However, two studies from Lajoie and colleagues (2013 and 2015) report the observation of exclusive formation of cyclic phosphate products as second products, resulting from intramolecular transphosphatidylation. Cyclic phosphates have vastly different biological properties from their monoester counterparts, and they may be relevant to the pathology of brown spider envenomation.</text>
</comment>
<sequence length="276" mass="31495">WIMGHMVNKIEQINEFLDLGANSIEVDIAFDELGYPEYTYHGVPCDCKRYCTKSEKIDDFIEALSAATTPGNPKFRKELTLVVFDLKTGGFDASRMYKSGKAFAELIQFSYWKGSDDAGRAYIVLSLPKLDHYEFIKAFREHFDTSTFKNLLEERVGYDFSGNEDMGLTRVVLNKAGVNDREHVWQGDGITNCILRSLDRVKAAVAIRDSATGYINKVYFWTIQAYSSVSDALNAEVDGIMTNEPDVIANVLKEDAFKDRFRLATYRDNPWETFKR</sequence>
<accession>C0JB26</accession>
<organism>
    <name type="scientific">Loxosceles laeta</name>
    <name type="common">South American recluse spider</name>
    <name type="synonym">Scytodes laeta</name>
    <dbReference type="NCBI Taxonomy" id="58217"/>
    <lineage>
        <taxon>Eukaryota</taxon>
        <taxon>Metazoa</taxon>
        <taxon>Ecdysozoa</taxon>
        <taxon>Arthropoda</taxon>
        <taxon>Chelicerata</taxon>
        <taxon>Arachnida</taxon>
        <taxon>Araneae</taxon>
        <taxon>Araneomorphae</taxon>
        <taxon>Haplogynae</taxon>
        <taxon>Scytodoidea</taxon>
        <taxon>Sicariidae</taxon>
        <taxon>Loxosceles</taxon>
    </lineage>
</organism>
<dbReference type="EC" id="4.6.1.-" evidence="4"/>
<dbReference type="EMBL" id="FJ171461">
    <property type="protein sequence ID" value="ACN48957.1"/>
    <property type="molecule type" value="mRNA"/>
</dbReference>
<dbReference type="SMR" id="C0JB26"/>
<dbReference type="GO" id="GO:0005576">
    <property type="term" value="C:extracellular region"/>
    <property type="evidence" value="ECO:0007669"/>
    <property type="project" value="UniProtKB-SubCell"/>
</dbReference>
<dbReference type="GO" id="GO:0016829">
    <property type="term" value="F:lyase activity"/>
    <property type="evidence" value="ECO:0007669"/>
    <property type="project" value="UniProtKB-KW"/>
</dbReference>
<dbReference type="GO" id="GO:0046872">
    <property type="term" value="F:metal ion binding"/>
    <property type="evidence" value="ECO:0007669"/>
    <property type="project" value="UniProtKB-KW"/>
</dbReference>
<dbReference type="GO" id="GO:0008081">
    <property type="term" value="F:phosphoric diester hydrolase activity"/>
    <property type="evidence" value="ECO:0007669"/>
    <property type="project" value="InterPro"/>
</dbReference>
<dbReference type="GO" id="GO:0090729">
    <property type="term" value="F:toxin activity"/>
    <property type="evidence" value="ECO:0007669"/>
    <property type="project" value="UniProtKB-KW"/>
</dbReference>
<dbReference type="GO" id="GO:0031640">
    <property type="term" value="P:killing of cells of another organism"/>
    <property type="evidence" value="ECO:0007669"/>
    <property type="project" value="UniProtKB-KW"/>
</dbReference>
<dbReference type="GO" id="GO:0016042">
    <property type="term" value="P:lipid catabolic process"/>
    <property type="evidence" value="ECO:0007669"/>
    <property type="project" value="UniProtKB-KW"/>
</dbReference>
<dbReference type="CDD" id="cd08576">
    <property type="entry name" value="GDPD_like_SMaseD_PLD"/>
    <property type="match status" value="1"/>
</dbReference>
<dbReference type="Gene3D" id="3.20.20.190">
    <property type="entry name" value="Phosphatidylinositol (PI) phosphodiesterase"/>
    <property type="match status" value="1"/>
</dbReference>
<dbReference type="InterPro" id="IPR017946">
    <property type="entry name" value="PLC-like_Pdiesterase_TIM-brl"/>
</dbReference>
<dbReference type="SUPFAM" id="SSF51695">
    <property type="entry name" value="PLC-like phosphodiesterases"/>
    <property type="match status" value="1"/>
</dbReference>
<keyword id="KW-0204">Cytolysis</keyword>
<keyword id="KW-1061">Dermonecrotic toxin</keyword>
<keyword id="KW-1015">Disulfide bond</keyword>
<keyword id="KW-0354">Hemolysis</keyword>
<keyword id="KW-0442">Lipid degradation</keyword>
<keyword id="KW-0443">Lipid metabolism</keyword>
<keyword id="KW-0456">Lyase</keyword>
<keyword id="KW-0460">Magnesium</keyword>
<keyword id="KW-0479">Metal-binding</keyword>
<keyword id="KW-0964">Secreted</keyword>
<keyword id="KW-0800">Toxin</keyword>
<reference key="1">
    <citation type="journal article" date="2009" name="Mol. Biol. Evol.">
        <title>Molecular evolution, functional variation, and proposed nomenclature of the gene family that includes sphingomyelinase D in sicariid spider venoms.</title>
        <authorList>
            <person name="Binford G.J."/>
            <person name="Bodner M.R."/>
            <person name="Cordes M.H."/>
            <person name="Baldwin K.L."/>
            <person name="Rynerson M.R."/>
            <person name="Burns S.N."/>
            <person name="Zobel-Thropp P.A."/>
        </authorList>
    </citation>
    <scope>NUCLEOTIDE SEQUENCE [MRNA]</scope>
    <scope>NOMENCLATURE</scope>
    <source>
        <tissue>Venom gland</tissue>
    </source>
</reference>
<proteinExistence type="evidence at transcript level"/>